<keyword id="KW-0025">Alternative splicing</keyword>
<keyword id="KW-0325">Glycoprotein</keyword>
<keyword id="KW-0378">Hydrolase</keyword>
<keyword id="KW-0442">Lipid degradation</keyword>
<keyword id="KW-0443">Lipid metabolism</keyword>
<keyword id="KW-1185">Reference proteome</keyword>
<keyword id="KW-0964">Secreted</keyword>
<keyword id="KW-0732">Signal</keyword>
<comment type="subcellular location">
    <subcellularLocation>
        <location evidence="5">Secreted</location>
    </subcellularLocation>
</comment>
<comment type="alternative products">
    <event type="alternative splicing"/>
    <isoform>
        <id>Q94CH5-1</id>
        <name>1</name>
        <sequence type="displayed"/>
    </isoform>
    <isoform>
        <id>Q94CH5-2</id>
        <name>2</name>
        <sequence type="described" ref="VSP_036684"/>
    </isoform>
    <isoform>
        <id>Q94CH5-3</id>
        <name>3</name>
        <sequence type="described" ref="VSP_036685"/>
    </isoform>
    <isoform>
        <id>Q94CH5-4</id>
        <name>4</name>
        <sequence type="described" ref="VSP_036683 VSP_036684"/>
    </isoform>
</comment>
<comment type="tissue specificity">
    <text evidence="3">Flower buds.</text>
</comment>
<comment type="similarity">
    <text evidence="5">Belongs to the 'GDSL' lipolytic enzyme family.</text>
</comment>
<comment type="sequence caution" evidence="5">
    <conflict type="erroneous gene model prediction">
        <sequence resource="EMBL-CDS" id="AAF26758"/>
    </conflict>
</comment>
<dbReference type="EC" id="3.1.1.-"/>
<dbReference type="EMBL" id="AC007396">
    <property type="protein sequence ID" value="AAF26758.2"/>
    <property type="status" value="ALT_SEQ"/>
    <property type="molecule type" value="Genomic_DNA"/>
</dbReference>
<dbReference type="EMBL" id="CP002684">
    <property type="protein sequence ID" value="AEE35775.1"/>
    <property type="molecule type" value="Genomic_DNA"/>
</dbReference>
<dbReference type="EMBL" id="CP002684">
    <property type="protein sequence ID" value="AEE35776.1"/>
    <property type="molecule type" value="Genomic_DNA"/>
</dbReference>
<dbReference type="EMBL" id="CP002684">
    <property type="protein sequence ID" value="AEE35777.1"/>
    <property type="molecule type" value="Genomic_DNA"/>
</dbReference>
<dbReference type="EMBL" id="AY028613">
    <property type="protein sequence ID" value="AAK30020.1"/>
    <property type="molecule type" value="mRNA"/>
</dbReference>
<dbReference type="EMBL" id="DQ446435">
    <property type="protein sequence ID" value="ABE65778.1"/>
    <property type="molecule type" value="mRNA"/>
</dbReference>
<dbReference type="RefSeq" id="NP_001077830.1">
    <molecule id="Q94CH5-2"/>
    <property type="nucleotide sequence ID" value="NM_001084361.2"/>
</dbReference>
<dbReference type="RefSeq" id="NP_001077831.1">
    <molecule id="Q94CH5-3"/>
    <property type="nucleotide sequence ID" value="NM_001084362.1"/>
</dbReference>
<dbReference type="RefSeq" id="NP_001117605.1">
    <molecule id="Q94CH5-4"/>
    <property type="nucleotide sequence ID" value="NM_001124133.2"/>
</dbReference>
<dbReference type="RefSeq" id="NP_565122.1">
    <property type="nucleotide sequence ID" value="NM_106242.2"/>
</dbReference>
<dbReference type="BioGRID" id="29144">
    <property type="interactions" value="1"/>
</dbReference>
<dbReference type="FunCoup" id="Q94CH5">
    <property type="interactions" value="89"/>
</dbReference>
<dbReference type="STRING" id="3702.Q94CH5"/>
<dbReference type="GlyCosmos" id="Q94CH5">
    <property type="glycosylation" value="1 site, No reported glycans"/>
</dbReference>
<dbReference type="GlyGen" id="Q94CH5">
    <property type="glycosylation" value="1 site"/>
</dbReference>
<dbReference type="iPTMnet" id="Q94CH5"/>
<dbReference type="PaxDb" id="3702-AT1G75920.1"/>
<dbReference type="PeptideAtlas" id="Q94CH5"/>
<dbReference type="EnsemblPlants" id="AT1G75920.2">
    <molecule id="Q94CH5-2"/>
    <property type="protein sequence ID" value="AT1G75920.2"/>
    <property type="gene ID" value="AT1G75920"/>
</dbReference>
<dbReference type="EnsemblPlants" id="AT1G75920.3">
    <molecule id="Q94CH5-3"/>
    <property type="protein sequence ID" value="AT1G75920.3"/>
    <property type="gene ID" value="AT1G75920"/>
</dbReference>
<dbReference type="EnsemblPlants" id="AT1G75920.4">
    <molecule id="Q94CH5-4"/>
    <property type="protein sequence ID" value="AT1G75920.4"/>
    <property type="gene ID" value="AT1G75920"/>
</dbReference>
<dbReference type="GeneID" id="843925"/>
<dbReference type="Gramene" id="AT1G75920.2">
    <molecule id="Q94CH5-2"/>
    <property type="protein sequence ID" value="AT1G75920.2"/>
    <property type="gene ID" value="AT1G75920"/>
</dbReference>
<dbReference type="Gramene" id="AT1G75920.3">
    <molecule id="Q94CH5-3"/>
    <property type="protein sequence ID" value="AT1G75920.3"/>
    <property type="gene ID" value="AT1G75920"/>
</dbReference>
<dbReference type="Gramene" id="AT1G75920.4">
    <molecule id="Q94CH5-4"/>
    <property type="protein sequence ID" value="AT1G75920.4"/>
    <property type="gene ID" value="AT1G75920"/>
</dbReference>
<dbReference type="KEGG" id="ath:AT1G75920"/>
<dbReference type="Araport" id="AT1G75920"/>
<dbReference type="TAIR" id="AT1G75920"/>
<dbReference type="InParanoid" id="Q94CH5"/>
<dbReference type="OMA" id="EERTMSI"/>
<dbReference type="PhylomeDB" id="Q94CH5"/>
<dbReference type="PRO" id="PR:Q94CH5"/>
<dbReference type="Proteomes" id="UP000006548">
    <property type="component" value="Chromosome 1"/>
</dbReference>
<dbReference type="ExpressionAtlas" id="Q94CH5">
    <property type="expression patterns" value="baseline and differential"/>
</dbReference>
<dbReference type="GO" id="GO:0005576">
    <property type="term" value="C:extracellular region"/>
    <property type="evidence" value="ECO:0007669"/>
    <property type="project" value="UniProtKB-SubCell"/>
</dbReference>
<dbReference type="GO" id="GO:0016298">
    <property type="term" value="F:lipase activity"/>
    <property type="evidence" value="ECO:0007669"/>
    <property type="project" value="InterPro"/>
</dbReference>
<dbReference type="GO" id="GO:0016042">
    <property type="term" value="P:lipid catabolic process"/>
    <property type="evidence" value="ECO:0007669"/>
    <property type="project" value="UniProtKB-KW"/>
</dbReference>
<dbReference type="CDD" id="cd01837">
    <property type="entry name" value="SGNH_plant_lipase_like"/>
    <property type="match status" value="1"/>
</dbReference>
<dbReference type="FunFam" id="3.40.50.1110:FF:000003">
    <property type="entry name" value="GDSL esterase/lipase APG"/>
    <property type="match status" value="1"/>
</dbReference>
<dbReference type="Gene3D" id="3.40.50.1110">
    <property type="entry name" value="SGNH hydrolase"/>
    <property type="match status" value="1"/>
</dbReference>
<dbReference type="InterPro" id="IPR001087">
    <property type="entry name" value="GDSL"/>
</dbReference>
<dbReference type="InterPro" id="IPR050592">
    <property type="entry name" value="GDSL_lipolytic_enzyme"/>
</dbReference>
<dbReference type="InterPro" id="IPR008265">
    <property type="entry name" value="Lipase_GDSL_AS"/>
</dbReference>
<dbReference type="InterPro" id="IPR036514">
    <property type="entry name" value="SGNH_hydro_sf"/>
</dbReference>
<dbReference type="InterPro" id="IPR035669">
    <property type="entry name" value="SGNH_plant_lipase-like"/>
</dbReference>
<dbReference type="PANTHER" id="PTHR45642">
    <property type="entry name" value="GDSL ESTERASE/LIPASE EXL3"/>
    <property type="match status" value="1"/>
</dbReference>
<dbReference type="PANTHER" id="PTHR45642:SF55">
    <property type="entry name" value="GDSL ESTERASE_LIPASE EXL4-RELATED"/>
    <property type="match status" value="1"/>
</dbReference>
<dbReference type="Pfam" id="PF00657">
    <property type="entry name" value="Lipase_GDSL"/>
    <property type="match status" value="1"/>
</dbReference>
<dbReference type="SUPFAM" id="SSF52266">
    <property type="entry name" value="SGNH hydrolase"/>
    <property type="match status" value="1"/>
</dbReference>
<dbReference type="PROSITE" id="PS01098">
    <property type="entry name" value="LIPASE_GDSL_SER"/>
    <property type="match status" value="1"/>
</dbReference>
<protein>
    <recommendedName>
        <fullName>GDSL esterase/lipase EXL5</fullName>
        <ecNumber>3.1.1.-</ecNumber>
    </recommendedName>
    <alternativeName>
        <fullName>Family II extracellular lipase 5</fullName>
        <shortName>Family II lipase EXL5</shortName>
    </alternativeName>
</protein>
<gene>
    <name type="primary">EXL5</name>
    <name type="ordered locus">At1g75920</name>
    <name type="ORF">T4O12.14</name>
</gene>
<accession>Q94CH5</accession>
<accession>A8MR69</accession>
<accession>B3H6N8</accession>
<accession>Q1PFC8</accession>
<accession>Q9LQS4</accession>
<reference key="1">
    <citation type="journal article" date="2000" name="Nature">
        <title>Sequence and analysis of chromosome 1 of the plant Arabidopsis thaliana.</title>
        <authorList>
            <person name="Theologis A."/>
            <person name="Ecker J.R."/>
            <person name="Palm C.J."/>
            <person name="Federspiel N.A."/>
            <person name="Kaul S."/>
            <person name="White O."/>
            <person name="Alonso J."/>
            <person name="Altafi H."/>
            <person name="Araujo R."/>
            <person name="Bowman C.L."/>
            <person name="Brooks S.Y."/>
            <person name="Buehler E."/>
            <person name="Chan A."/>
            <person name="Chao Q."/>
            <person name="Chen H."/>
            <person name="Cheuk R.F."/>
            <person name="Chin C.W."/>
            <person name="Chung M.K."/>
            <person name="Conn L."/>
            <person name="Conway A.B."/>
            <person name="Conway A.R."/>
            <person name="Creasy T.H."/>
            <person name="Dewar K."/>
            <person name="Dunn P."/>
            <person name="Etgu P."/>
            <person name="Feldblyum T.V."/>
            <person name="Feng J.-D."/>
            <person name="Fong B."/>
            <person name="Fujii C.Y."/>
            <person name="Gill J.E."/>
            <person name="Goldsmith A.D."/>
            <person name="Haas B."/>
            <person name="Hansen N.F."/>
            <person name="Hughes B."/>
            <person name="Huizar L."/>
            <person name="Hunter J.L."/>
            <person name="Jenkins J."/>
            <person name="Johnson-Hopson C."/>
            <person name="Khan S."/>
            <person name="Khaykin E."/>
            <person name="Kim C.J."/>
            <person name="Koo H.L."/>
            <person name="Kremenetskaia I."/>
            <person name="Kurtz D.B."/>
            <person name="Kwan A."/>
            <person name="Lam B."/>
            <person name="Langin-Hooper S."/>
            <person name="Lee A."/>
            <person name="Lee J.M."/>
            <person name="Lenz C.A."/>
            <person name="Li J.H."/>
            <person name="Li Y.-P."/>
            <person name="Lin X."/>
            <person name="Liu S.X."/>
            <person name="Liu Z.A."/>
            <person name="Luros J.S."/>
            <person name="Maiti R."/>
            <person name="Marziali A."/>
            <person name="Militscher J."/>
            <person name="Miranda M."/>
            <person name="Nguyen M."/>
            <person name="Nierman W.C."/>
            <person name="Osborne B.I."/>
            <person name="Pai G."/>
            <person name="Peterson J."/>
            <person name="Pham P.K."/>
            <person name="Rizzo M."/>
            <person name="Rooney T."/>
            <person name="Rowley D."/>
            <person name="Sakano H."/>
            <person name="Salzberg S.L."/>
            <person name="Schwartz J.R."/>
            <person name="Shinn P."/>
            <person name="Southwick A.M."/>
            <person name="Sun H."/>
            <person name="Tallon L.J."/>
            <person name="Tambunga G."/>
            <person name="Toriumi M.J."/>
            <person name="Town C.D."/>
            <person name="Utterback T."/>
            <person name="Van Aken S."/>
            <person name="Vaysberg M."/>
            <person name="Vysotskaia V.S."/>
            <person name="Walker M."/>
            <person name="Wu D."/>
            <person name="Yu G."/>
            <person name="Fraser C.M."/>
            <person name="Venter J.C."/>
            <person name="Davis R.W."/>
        </authorList>
    </citation>
    <scope>NUCLEOTIDE SEQUENCE [LARGE SCALE GENOMIC DNA]</scope>
    <source>
        <strain>cv. Columbia</strain>
    </source>
</reference>
<reference key="2">
    <citation type="journal article" date="2017" name="Plant J.">
        <title>Araport11: a complete reannotation of the Arabidopsis thaliana reference genome.</title>
        <authorList>
            <person name="Cheng C.Y."/>
            <person name="Krishnakumar V."/>
            <person name="Chan A.P."/>
            <person name="Thibaud-Nissen F."/>
            <person name="Schobel S."/>
            <person name="Town C.D."/>
        </authorList>
    </citation>
    <scope>GENOME REANNOTATION</scope>
    <source>
        <strain>cv. Columbia</strain>
    </source>
</reference>
<reference key="3">
    <citation type="journal article" date="2001" name="Science">
        <title>Gene families from the Arabidopsis thaliana pollen coat proteome.</title>
        <authorList>
            <person name="Mayfield J.A."/>
            <person name="Fiebig A."/>
            <person name="Johnstone S.E."/>
            <person name="Preuss D."/>
        </authorList>
    </citation>
    <scope>NUCLEOTIDE SEQUENCE [MRNA] OF 6-353 (ISOFORM 1)</scope>
    <scope>TISSUE SPECIFICITY</scope>
</reference>
<reference key="4">
    <citation type="journal article" date="2006" name="Plant Biotechnol. J.">
        <title>Simultaneous high-throughput recombinational cloning of open reading frames in closed and open configurations.</title>
        <authorList>
            <person name="Underwood B.A."/>
            <person name="Vanderhaeghen R."/>
            <person name="Whitford R."/>
            <person name="Town C.D."/>
            <person name="Hilson P."/>
        </authorList>
    </citation>
    <scope>NUCLEOTIDE SEQUENCE [LARGE SCALE MRNA] OF 6-343 (ISOFORM 2)</scope>
    <source>
        <strain>cv. Columbia</strain>
    </source>
</reference>
<reference key="5">
    <citation type="journal article" date="2004" name="Prog. Lipid Res.">
        <title>GDSL family of serine esterases/lipases.</title>
        <authorList>
            <person name="Akoh C.C."/>
            <person name="Lee G.-C."/>
            <person name="Liaw Y.-C."/>
            <person name="Huang T.-H."/>
            <person name="Shaw J.-F."/>
        </authorList>
    </citation>
    <scope>REVIEW</scope>
</reference>
<reference key="6">
    <citation type="journal article" date="2008" name="Pak. J. Biol. Sci.">
        <title>Sequence analysis of GDSL lipase gene family in Arabidopsis thaliana.</title>
        <authorList>
            <person name="Ling H."/>
        </authorList>
    </citation>
    <scope>GENE FAMILY</scope>
</reference>
<name>EXL5_ARATH</name>
<organism>
    <name type="scientific">Arabidopsis thaliana</name>
    <name type="common">Mouse-ear cress</name>
    <dbReference type="NCBI Taxonomy" id="3702"/>
    <lineage>
        <taxon>Eukaryota</taxon>
        <taxon>Viridiplantae</taxon>
        <taxon>Streptophyta</taxon>
        <taxon>Embryophyta</taxon>
        <taxon>Tracheophyta</taxon>
        <taxon>Spermatophyta</taxon>
        <taxon>Magnoliopsida</taxon>
        <taxon>eudicotyledons</taxon>
        <taxon>Gunneridae</taxon>
        <taxon>Pentapetalae</taxon>
        <taxon>rosids</taxon>
        <taxon>malvids</taxon>
        <taxon>Brassicales</taxon>
        <taxon>Brassicaceae</taxon>
        <taxon>Camelineae</taxon>
        <taxon>Arabidopsis</taxon>
    </lineage>
</organism>
<evidence type="ECO:0000250" key="1"/>
<evidence type="ECO:0000255" key="2"/>
<evidence type="ECO:0000269" key="3">
    <source>
    </source>
</evidence>
<evidence type="ECO:0000303" key="4">
    <source>
    </source>
</evidence>
<evidence type="ECO:0000305" key="5"/>
<sequence length="358" mass="39946">MFRKKMLVLALFSIYFLSIEAVRNESFPALLAFGDSMVDTGNNNYLLTLMKGNYWPYGWNFDSKIPTGRFGNGRVFSDVVGIILKSSLQCFFVISAEGLGIKRIVPAYRKLYIAPSDLKTGVSFASGGAGVDPVTSKLLRVLSPADQVKDFKGYKRKLKGVVGRSKAKKIVANSVILVSEGNNDIGITYAIHDAGMRLMTPKVYTSKLVGWNKKFIKDLYDHGARKFAVMGVIPLGCLPMSRLIFGGFFVWCNFLANTISEDYNKKLKSGIKSWRGASDFRGARFVYVDMYNSLMDVINNHRKYGFTHEKNGCCCMLTAIVPCSNPDKYVFYDFAHPSEKAYKTIAKKLVEDIKTGLA</sequence>
<feature type="signal peptide" evidence="2">
    <location>
        <begin position="1"/>
        <end position="21"/>
    </location>
</feature>
<feature type="chain" id="PRO_0000367332" description="GDSL esterase/lipase EXL5">
    <location>
        <begin position="22"/>
        <end position="358"/>
    </location>
</feature>
<feature type="active site" description="Nucleophile" evidence="1">
    <location>
        <position position="36"/>
    </location>
</feature>
<feature type="active site" evidence="1">
    <location>
        <position position="333"/>
    </location>
</feature>
<feature type="active site" evidence="1">
    <location>
        <position position="336"/>
    </location>
</feature>
<feature type="glycosylation site" description="N-linked (GlcNAc...) asparagine" evidence="2">
    <location>
        <position position="24"/>
    </location>
</feature>
<feature type="splice variant" id="VSP_036683" description="In isoform 4." evidence="5">
    <original>MFRKKMLVLALFSIYFLSIEAVRNESFPALLAFGDSMVDTGNNNYLLTLMK</original>
    <variation>MACALRGPIETISAHQTMTSPLP</variation>
    <location>
        <begin position="1"/>
        <end position="51"/>
    </location>
</feature>
<feature type="splice variant" id="VSP_036684" description="In isoform 2 and isoform 4." evidence="4">
    <location>
        <begin position="81"/>
        <end position="95"/>
    </location>
</feature>
<feature type="splice variant" id="VSP_036685" description="In isoform 3." evidence="5">
    <location>
        <begin position="82"/>
        <end position="127"/>
    </location>
</feature>
<proteinExistence type="evidence at transcript level"/>